<accession>D4I110</accession>
<sequence>MSWIRIRRSGVLLLALVLSGCINQQQQPQPAAPVEPVTPPVNVPQPPKAEPGQNVPPPPKMQPLNWSATVSPLVGQMLKADGINAGNVLLVDNVKNSTNGSLQSAKATAALLNSLENNGQFSLVTPQQLAAARQTLGLSADDSLVSRSKAIGLARYVGAQYVLYSNAEGDIKSPSLQLQLMLVQTGEIIWSGSGAVVH</sequence>
<evidence type="ECO:0000255" key="1">
    <source>
        <dbReference type="HAMAP-Rule" id="MF_01889"/>
    </source>
</evidence>
<evidence type="ECO:0000256" key="2">
    <source>
        <dbReference type="SAM" id="MobiDB-lite"/>
    </source>
</evidence>
<name>LPOB_ERWAC</name>
<proteinExistence type="inferred from homology"/>
<feature type="signal peptide" evidence="1">
    <location>
        <begin position="1"/>
        <end position="20"/>
    </location>
</feature>
<feature type="chain" id="PRO_0000405783" description="Penicillin-binding protein activator LpoB">
    <location>
        <begin position="21"/>
        <end position="198"/>
    </location>
</feature>
<feature type="region of interest" description="Disordered" evidence="2">
    <location>
        <begin position="28"/>
        <end position="62"/>
    </location>
</feature>
<feature type="compositionally biased region" description="Pro residues" evidence="2">
    <location>
        <begin position="30"/>
        <end position="61"/>
    </location>
</feature>
<feature type="lipid moiety-binding region" description="N-palmitoyl cysteine" evidence="1">
    <location>
        <position position="21"/>
    </location>
</feature>
<feature type="lipid moiety-binding region" description="S-diacylglycerol cysteine" evidence="1">
    <location>
        <position position="21"/>
    </location>
</feature>
<organism>
    <name type="scientific">Erwinia amylovora (strain CFBP1430)</name>
    <dbReference type="NCBI Taxonomy" id="665029"/>
    <lineage>
        <taxon>Bacteria</taxon>
        <taxon>Pseudomonadati</taxon>
        <taxon>Pseudomonadota</taxon>
        <taxon>Gammaproteobacteria</taxon>
        <taxon>Enterobacterales</taxon>
        <taxon>Erwiniaceae</taxon>
        <taxon>Erwinia</taxon>
    </lineage>
</organism>
<reference key="1">
    <citation type="journal article" date="2010" name="Mol. Plant Microbe Interact.">
        <title>Complete genome sequence of the fire blight pathogen Erwinia amylovora CFBP 1430 and comparison to other Erwinia spp.</title>
        <authorList>
            <person name="Smits T.H."/>
            <person name="Rezzonico F."/>
            <person name="Kamber T."/>
            <person name="Blom J."/>
            <person name="Goesmann A."/>
            <person name="Frey J.E."/>
            <person name="Duffy B."/>
        </authorList>
    </citation>
    <scope>NUCLEOTIDE SEQUENCE [LARGE SCALE GENOMIC DNA]</scope>
    <source>
        <strain>CFBP1430</strain>
    </source>
</reference>
<keyword id="KW-0998">Cell outer membrane</keyword>
<keyword id="KW-0133">Cell shape</keyword>
<keyword id="KW-0449">Lipoprotein</keyword>
<keyword id="KW-0472">Membrane</keyword>
<keyword id="KW-0564">Palmitate</keyword>
<keyword id="KW-0573">Peptidoglycan synthesis</keyword>
<keyword id="KW-0732">Signal</keyword>
<gene>
    <name evidence="1" type="primary">lpoB</name>
    <name type="ordered locus">EAMY_1485</name>
</gene>
<comment type="function">
    <text evidence="1">Regulator of peptidoglycan synthesis that is essential for the function of penicillin-binding protein 1B (PBP1b).</text>
</comment>
<comment type="subunit">
    <text evidence="1">Interacts with PBP1b.</text>
</comment>
<comment type="subcellular location">
    <subcellularLocation>
        <location evidence="1">Cell outer membrane</location>
        <topology evidence="1">Lipid-anchor</topology>
        <orientation evidence="1">Periplasmic side</orientation>
    </subcellularLocation>
</comment>
<comment type="similarity">
    <text evidence="1">Belongs to the LpoB family.</text>
</comment>
<dbReference type="EMBL" id="FN434113">
    <property type="protein sequence ID" value="CBA20435.1"/>
    <property type="molecule type" value="Genomic_DNA"/>
</dbReference>
<dbReference type="RefSeq" id="WP_004157139.1">
    <property type="nucleotide sequence ID" value="NC_013961.1"/>
</dbReference>
<dbReference type="SMR" id="D4I110"/>
<dbReference type="STRING" id="665029.EAMY_1485"/>
<dbReference type="GeneID" id="97605773"/>
<dbReference type="KEGG" id="eam:EAMY_1485"/>
<dbReference type="PATRIC" id="fig|665029.3.peg.1445"/>
<dbReference type="eggNOG" id="COG3417">
    <property type="taxonomic scope" value="Bacteria"/>
</dbReference>
<dbReference type="HOGENOM" id="CLU_092328_0_0_6"/>
<dbReference type="OrthoDB" id="6466283at2"/>
<dbReference type="Proteomes" id="UP000001841">
    <property type="component" value="Chromosome"/>
</dbReference>
<dbReference type="GO" id="GO:0031241">
    <property type="term" value="C:periplasmic side of cell outer membrane"/>
    <property type="evidence" value="ECO:0007669"/>
    <property type="project" value="UniProtKB-UniRule"/>
</dbReference>
<dbReference type="GO" id="GO:0030234">
    <property type="term" value="F:enzyme regulator activity"/>
    <property type="evidence" value="ECO:0007669"/>
    <property type="project" value="UniProtKB-UniRule"/>
</dbReference>
<dbReference type="GO" id="GO:0009252">
    <property type="term" value="P:peptidoglycan biosynthetic process"/>
    <property type="evidence" value="ECO:0007669"/>
    <property type="project" value="UniProtKB-UniRule"/>
</dbReference>
<dbReference type="GO" id="GO:0008360">
    <property type="term" value="P:regulation of cell shape"/>
    <property type="evidence" value="ECO:0007669"/>
    <property type="project" value="UniProtKB-KW"/>
</dbReference>
<dbReference type="Gene3D" id="3.40.50.10610">
    <property type="entry name" value="ABC-type transport auxiliary lipoprotein component"/>
    <property type="match status" value="1"/>
</dbReference>
<dbReference type="HAMAP" id="MF_01889">
    <property type="entry name" value="LpoB"/>
    <property type="match status" value="1"/>
</dbReference>
<dbReference type="InterPro" id="IPR014094">
    <property type="entry name" value="LpoB"/>
</dbReference>
<dbReference type="NCBIfam" id="TIGR02722">
    <property type="entry name" value="lp"/>
    <property type="match status" value="1"/>
</dbReference>
<dbReference type="PANTHER" id="PTHR40593">
    <property type="entry name" value="PENICILLIN-BINDING PROTEIN ACTIVATOR LPOB"/>
    <property type="match status" value="1"/>
</dbReference>
<dbReference type="PANTHER" id="PTHR40593:SF1">
    <property type="entry name" value="PENICILLIN-BINDING PROTEIN ACTIVATOR LPOB"/>
    <property type="match status" value="1"/>
</dbReference>
<dbReference type="Pfam" id="PF13036">
    <property type="entry name" value="LpoB"/>
    <property type="match status" value="1"/>
</dbReference>
<dbReference type="PROSITE" id="PS51257">
    <property type="entry name" value="PROKAR_LIPOPROTEIN"/>
    <property type="match status" value="1"/>
</dbReference>
<protein>
    <recommendedName>
        <fullName evidence="1">Penicillin-binding protein activator LpoB</fullName>
        <shortName evidence="1">PBP activator LpoB</shortName>
    </recommendedName>
</protein>